<reference key="1">
    <citation type="submission" date="2008-08" db="EMBL/GenBank/DDBJ databases">
        <title>Complete sequence of Vibrio fischeri strain MJ11.</title>
        <authorList>
            <person name="Mandel M.J."/>
            <person name="Stabb E.V."/>
            <person name="Ruby E.G."/>
            <person name="Ferriera S."/>
            <person name="Johnson J."/>
            <person name="Kravitz S."/>
            <person name="Beeson K."/>
            <person name="Sutton G."/>
            <person name="Rogers Y.-H."/>
            <person name="Friedman R."/>
            <person name="Frazier M."/>
            <person name="Venter J.C."/>
        </authorList>
    </citation>
    <scope>NUCLEOTIDE SEQUENCE [LARGE SCALE GENOMIC DNA]</scope>
    <source>
        <strain>MJ11</strain>
    </source>
</reference>
<comment type="function">
    <text evidence="1">ATP-dependent specificity component of the Clp protease. It directs the protease to specific substrates. Can perform chaperone functions in the absence of ClpP.</text>
</comment>
<comment type="subunit">
    <text evidence="1">Component of the ClpX-ClpP complex. Forms a hexameric ring that, in the presence of ATP, binds to fourteen ClpP subunits assembled into a disk-like structure with a central cavity, resembling the structure of eukaryotic proteasomes.</text>
</comment>
<comment type="similarity">
    <text evidence="1">Belongs to the ClpX chaperone family.</text>
</comment>
<keyword id="KW-0067">ATP-binding</keyword>
<keyword id="KW-0143">Chaperone</keyword>
<keyword id="KW-0479">Metal-binding</keyword>
<keyword id="KW-0547">Nucleotide-binding</keyword>
<keyword id="KW-0862">Zinc</keyword>
<feature type="chain" id="PRO_1000098015" description="ATP-dependent Clp protease ATP-binding subunit ClpX">
    <location>
        <begin position="1"/>
        <end position="428"/>
    </location>
</feature>
<feature type="domain" description="ClpX-type ZB" evidence="2">
    <location>
        <begin position="4"/>
        <end position="57"/>
    </location>
</feature>
<feature type="binding site" evidence="2">
    <location>
        <position position="16"/>
    </location>
    <ligand>
        <name>Zn(2+)</name>
        <dbReference type="ChEBI" id="CHEBI:29105"/>
    </ligand>
</feature>
<feature type="binding site" evidence="2">
    <location>
        <position position="19"/>
    </location>
    <ligand>
        <name>Zn(2+)</name>
        <dbReference type="ChEBI" id="CHEBI:29105"/>
    </ligand>
</feature>
<feature type="binding site" evidence="2">
    <location>
        <position position="38"/>
    </location>
    <ligand>
        <name>Zn(2+)</name>
        <dbReference type="ChEBI" id="CHEBI:29105"/>
    </ligand>
</feature>
<feature type="binding site" evidence="2">
    <location>
        <position position="41"/>
    </location>
    <ligand>
        <name>Zn(2+)</name>
        <dbReference type="ChEBI" id="CHEBI:29105"/>
    </ligand>
</feature>
<feature type="binding site" evidence="1">
    <location>
        <begin position="124"/>
        <end position="131"/>
    </location>
    <ligand>
        <name>ATP</name>
        <dbReference type="ChEBI" id="CHEBI:30616"/>
    </ligand>
</feature>
<accession>B5FBZ9</accession>
<evidence type="ECO:0000255" key="1">
    <source>
        <dbReference type="HAMAP-Rule" id="MF_00175"/>
    </source>
</evidence>
<evidence type="ECO:0000255" key="2">
    <source>
        <dbReference type="PROSITE-ProRule" id="PRU01250"/>
    </source>
</evidence>
<protein>
    <recommendedName>
        <fullName evidence="1">ATP-dependent Clp protease ATP-binding subunit ClpX</fullName>
    </recommendedName>
</protein>
<proteinExistence type="inferred from homology"/>
<dbReference type="EMBL" id="CP001139">
    <property type="protein sequence ID" value="ACH66406.1"/>
    <property type="molecule type" value="Genomic_DNA"/>
</dbReference>
<dbReference type="RefSeq" id="WP_012533703.1">
    <property type="nucleotide sequence ID" value="NC_011184.1"/>
</dbReference>
<dbReference type="SMR" id="B5FBZ9"/>
<dbReference type="KEGG" id="vfm:VFMJ11_0834"/>
<dbReference type="HOGENOM" id="CLU_014218_8_2_6"/>
<dbReference type="Proteomes" id="UP000001857">
    <property type="component" value="Chromosome I"/>
</dbReference>
<dbReference type="GO" id="GO:0009376">
    <property type="term" value="C:HslUV protease complex"/>
    <property type="evidence" value="ECO:0007669"/>
    <property type="project" value="TreeGrafter"/>
</dbReference>
<dbReference type="GO" id="GO:0005524">
    <property type="term" value="F:ATP binding"/>
    <property type="evidence" value="ECO:0007669"/>
    <property type="project" value="UniProtKB-UniRule"/>
</dbReference>
<dbReference type="GO" id="GO:0016887">
    <property type="term" value="F:ATP hydrolysis activity"/>
    <property type="evidence" value="ECO:0007669"/>
    <property type="project" value="InterPro"/>
</dbReference>
<dbReference type="GO" id="GO:0140662">
    <property type="term" value="F:ATP-dependent protein folding chaperone"/>
    <property type="evidence" value="ECO:0007669"/>
    <property type="project" value="InterPro"/>
</dbReference>
<dbReference type="GO" id="GO:0046983">
    <property type="term" value="F:protein dimerization activity"/>
    <property type="evidence" value="ECO:0007669"/>
    <property type="project" value="InterPro"/>
</dbReference>
<dbReference type="GO" id="GO:0051082">
    <property type="term" value="F:unfolded protein binding"/>
    <property type="evidence" value="ECO:0007669"/>
    <property type="project" value="UniProtKB-UniRule"/>
</dbReference>
<dbReference type="GO" id="GO:0008270">
    <property type="term" value="F:zinc ion binding"/>
    <property type="evidence" value="ECO:0007669"/>
    <property type="project" value="InterPro"/>
</dbReference>
<dbReference type="GO" id="GO:0051301">
    <property type="term" value="P:cell division"/>
    <property type="evidence" value="ECO:0007669"/>
    <property type="project" value="TreeGrafter"/>
</dbReference>
<dbReference type="GO" id="GO:0051603">
    <property type="term" value="P:proteolysis involved in protein catabolic process"/>
    <property type="evidence" value="ECO:0007669"/>
    <property type="project" value="TreeGrafter"/>
</dbReference>
<dbReference type="CDD" id="cd19497">
    <property type="entry name" value="RecA-like_ClpX"/>
    <property type="match status" value="1"/>
</dbReference>
<dbReference type="FunFam" id="1.10.8.60:FF:000002">
    <property type="entry name" value="ATP-dependent Clp protease ATP-binding subunit ClpX"/>
    <property type="match status" value="1"/>
</dbReference>
<dbReference type="FunFam" id="3.40.50.300:FF:000005">
    <property type="entry name" value="ATP-dependent Clp protease ATP-binding subunit ClpX"/>
    <property type="match status" value="1"/>
</dbReference>
<dbReference type="Gene3D" id="1.10.8.60">
    <property type="match status" value="1"/>
</dbReference>
<dbReference type="Gene3D" id="6.20.220.10">
    <property type="entry name" value="ClpX chaperone, C4-type zinc finger domain"/>
    <property type="match status" value="1"/>
</dbReference>
<dbReference type="Gene3D" id="3.40.50.300">
    <property type="entry name" value="P-loop containing nucleotide triphosphate hydrolases"/>
    <property type="match status" value="1"/>
</dbReference>
<dbReference type="HAMAP" id="MF_00175">
    <property type="entry name" value="ClpX"/>
    <property type="match status" value="1"/>
</dbReference>
<dbReference type="InterPro" id="IPR003593">
    <property type="entry name" value="AAA+_ATPase"/>
</dbReference>
<dbReference type="InterPro" id="IPR050052">
    <property type="entry name" value="ATP-dep_Clp_protease_ClpX"/>
</dbReference>
<dbReference type="InterPro" id="IPR003959">
    <property type="entry name" value="ATPase_AAA_core"/>
</dbReference>
<dbReference type="InterPro" id="IPR019489">
    <property type="entry name" value="Clp_ATPase_C"/>
</dbReference>
<dbReference type="InterPro" id="IPR004487">
    <property type="entry name" value="Clp_protease_ATP-bd_su_ClpX"/>
</dbReference>
<dbReference type="InterPro" id="IPR046425">
    <property type="entry name" value="ClpX_bact"/>
</dbReference>
<dbReference type="InterPro" id="IPR027417">
    <property type="entry name" value="P-loop_NTPase"/>
</dbReference>
<dbReference type="InterPro" id="IPR010603">
    <property type="entry name" value="Znf_CppX_C4"/>
</dbReference>
<dbReference type="InterPro" id="IPR038366">
    <property type="entry name" value="Znf_CppX_C4_sf"/>
</dbReference>
<dbReference type="NCBIfam" id="TIGR00382">
    <property type="entry name" value="clpX"/>
    <property type="match status" value="1"/>
</dbReference>
<dbReference type="NCBIfam" id="NF003745">
    <property type="entry name" value="PRK05342.1"/>
    <property type="match status" value="1"/>
</dbReference>
<dbReference type="PANTHER" id="PTHR48102:SF7">
    <property type="entry name" value="ATP-DEPENDENT CLP PROTEASE ATP-BINDING SUBUNIT CLPX-LIKE, MITOCHONDRIAL"/>
    <property type="match status" value="1"/>
</dbReference>
<dbReference type="PANTHER" id="PTHR48102">
    <property type="entry name" value="ATP-DEPENDENT CLP PROTEASE ATP-BINDING SUBUNIT CLPX-LIKE, MITOCHONDRIAL-RELATED"/>
    <property type="match status" value="1"/>
</dbReference>
<dbReference type="Pfam" id="PF07724">
    <property type="entry name" value="AAA_2"/>
    <property type="match status" value="1"/>
</dbReference>
<dbReference type="Pfam" id="PF10431">
    <property type="entry name" value="ClpB_D2-small"/>
    <property type="match status" value="1"/>
</dbReference>
<dbReference type="Pfam" id="PF06689">
    <property type="entry name" value="zf-C4_ClpX"/>
    <property type="match status" value="1"/>
</dbReference>
<dbReference type="SMART" id="SM00382">
    <property type="entry name" value="AAA"/>
    <property type="match status" value="1"/>
</dbReference>
<dbReference type="SMART" id="SM01086">
    <property type="entry name" value="ClpB_D2-small"/>
    <property type="match status" value="1"/>
</dbReference>
<dbReference type="SMART" id="SM00994">
    <property type="entry name" value="zf-C4_ClpX"/>
    <property type="match status" value="1"/>
</dbReference>
<dbReference type="SUPFAM" id="SSF57716">
    <property type="entry name" value="Glucocorticoid receptor-like (DNA-binding domain)"/>
    <property type="match status" value="1"/>
</dbReference>
<dbReference type="SUPFAM" id="SSF52540">
    <property type="entry name" value="P-loop containing nucleoside triphosphate hydrolases"/>
    <property type="match status" value="1"/>
</dbReference>
<dbReference type="PROSITE" id="PS51902">
    <property type="entry name" value="CLPX_ZB"/>
    <property type="match status" value="1"/>
</dbReference>
<sequence>MTDKRKDENSGKLLYCSFCGKSQHEVRKLIAGPSVYVCDECVDLCNDIIREELKDNTLSPKESSEELPTPRNIREHLDDYVIGQEHAKKVLAVAVYNHYKRLRNGDTTKDGVELGKSNILLIGPTGSGKTLLAETLARFLDVPFTMADATTLTEAGYVGEDVENIIQKLLQKCDYDPAKAERGIVYIDEIDKISRKSENPSITRDVSGEGVQQALLKLIEGTIASVPPQGGRKHPQQEFLQVDTSKILFICGGAFAGLDKVIEQRVATGTGIGFGADVRSKDNEATIGDLFKQIEPEDLVKFGLIPEFIGRLPVTTTLTELDEEALVQILSQPKNALTKQYGALFDLEGAELEFREDALKAIAKKAMDRKTGARGLRSILEAVLLETMYELPSKEGVSKVVIDESVINGESEPLLIFENTETKAISAE</sequence>
<name>CLPX_ALIFM</name>
<gene>
    <name evidence="1" type="primary">clpX</name>
    <name type="ordered locus">VFMJ11_0834</name>
</gene>
<organism>
    <name type="scientific">Aliivibrio fischeri (strain MJ11)</name>
    <name type="common">Vibrio fischeri</name>
    <dbReference type="NCBI Taxonomy" id="388396"/>
    <lineage>
        <taxon>Bacteria</taxon>
        <taxon>Pseudomonadati</taxon>
        <taxon>Pseudomonadota</taxon>
        <taxon>Gammaproteobacteria</taxon>
        <taxon>Vibrionales</taxon>
        <taxon>Vibrionaceae</taxon>
        <taxon>Aliivibrio</taxon>
    </lineage>
</organism>